<comment type="function">
    <text evidence="1">Transfers the 4'-phosphopantetheine moiety from coenzyme A to a Ser of acyl-carrier-protein.</text>
</comment>
<comment type="catalytic activity">
    <reaction evidence="1">
        <text>apo-[ACP] + CoA = holo-[ACP] + adenosine 3',5'-bisphosphate + H(+)</text>
        <dbReference type="Rhea" id="RHEA:12068"/>
        <dbReference type="Rhea" id="RHEA-COMP:9685"/>
        <dbReference type="Rhea" id="RHEA-COMP:9690"/>
        <dbReference type="ChEBI" id="CHEBI:15378"/>
        <dbReference type="ChEBI" id="CHEBI:29999"/>
        <dbReference type="ChEBI" id="CHEBI:57287"/>
        <dbReference type="ChEBI" id="CHEBI:58343"/>
        <dbReference type="ChEBI" id="CHEBI:64479"/>
        <dbReference type="EC" id="2.7.8.7"/>
    </reaction>
</comment>
<comment type="cofactor">
    <cofactor evidence="1">
        <name>Mg(2+)</name>
        <dbReference type="ChEBI" id="CHEBI:18420"/>
    </cofactor>
</comment>
<comment type="subcellular location">
    <subcellularLocation>
        <location evidence="1">Cytoplasm</location>
    </subcellularLocation>
</comment>
<comment type="similarity">
    <text evidence="1">Belongs to the P-Pant transferase superfamily. AcpS family.</text>
</comment>
<accession>B4T1F4</accession>
<proteinExistence type="inferred from homology"/>
<evidence type="ECO:0000255" key="1">
    <source>
        <dbReference type="HAMAP-Rule" id="MF_00101"/>
    </source>
</evidence>
<dbReference type="EC" id="2.7.8.7" evidence="1"/>
<dbReference type="EMBL" id="CP001113">
    <property type="protein sequence ID" value="ACF61660.1"/>
    <property type="molecule type" value="Genomic_DNA"/>
</dbReference>
<dbReference type="RefSeq" id="WP_000986042.1">
    <property type="nucleotide sequence ID" value="NZ_CCMR01000001.1"/>
</dbReference>
<dbReference type="SMR" id="B4T1F4"/>
<dbReference type="KEGG" id="see:SNSL254_A2780"/>
<dbReference type="HOGENOM" id="CLU_089696_3_1_6"/>
<dbReference type="Proteomes" id="UP000008824">
    <property type="component" value="Chromosome"/>
</dbReference>
<dbReference type="GO" id="GO:0005737">
    <property type="term" value="C:cytoplasm"/>
    <property type="evidence" value="ECO:0007669"/>
    <property type="project" value="UniProtKB-SubCell"/>
</dbReference>
<dbReference type="GO" id="GO:0008897">
    <property type="term" value="F:holo-[acyl-carrier-protein] synthase activity"/>
    <property type="evidence" value="ECO:0007669"/>
    <property type="project" value="UniProtKB-UniRule"/>
</dbReference>
<dbReference type="GO" id="GO:0000287">
    <property type="term" value="F:magnesium ion binding"/>
    <property type="evidence" value="ECO:0007669"/>
    <property type="project" value="UniProtKB-UniRule"/>
</dbReference>
<dbReference type="GO" id="GO:0006633">
    <property type="term" value="P:fatty acid biosynthetic process"/>
    <property type="evidence" value="ECO:0007669"/>
    <property type="project" value="UniProtKB-UniRule"/>
</dbReference>
<dbReference type="FunFam" id="3.90.470.20:FF:000001">
    <property type="entry name" value="Holo-[acyl-carrier-protein] synthase"/>
    <property type="match status" value="1"/>
</dbReference>
<dbReference type="Gene3D" id="3.90.470.20">
    <property type="entry name" value="4'-phosphopantetheinyl transferase domain"/>
    <property type="match status" value="1"/>
</dbReference>
<dbReference type="HAMAP" id="MF_00101">
    <property type="entry name" value="AcpS"/>
    <property type="match status" value="1"/>
</dbReference>
<dbReference type="InterPro" id="IPR008278">
    <property type="entry name" value="4-PPantetheinyl_Trfase_dom"/>
</dbReference>
<dbReference type="InterPro" id="IPR037143">
    <property type="entry name" value="4-PPantetheinyl_Trfase_dom_sf"/>
</dbReference>
<dbReference type="InterPro" id="IPR002582">
    <property type="entry name" value="ACPS"/>
</dbReference>
<dbReference type="InterPro" id="IPR004568">
    <property type="entry name" value="Ppantetheine-prot_Trfase_dom"/>
</dbReference>
<dbReference type="NCBIfam" id="TIGR00516">
    <property type="entry name" value="acpS"/>
    <property type="match status" value="1"/>
</dbReference>
<dbReference type="NCBIfam" id="TIGR00556">
    <property type="entry name" value="pantethn_trn"/>
    <property type="match status" value="1"/>
</dbReference>
<dbReference type="Pfam" id="PF01648">
    <property type="entry name" value="ACPS"/>
    <property type="match status" value="1"/>
</dbReference>
<dbReference type="SUPFAM" id="SSF56214">
    <property type="entry name" value="4'-phosphopantetheinyl transferase"/>
    <property type="match status" value="1"/>
</dbReference>
<gene>
    <name evidence="1" type="primary">acpS</name>
    <name type="ordered locus">SNSL254_A2780</name>
</gene>
<name>ACPS_SALNS</name>
<reference key="1">
    <citation type="journal article" date="2011" name="J. Bacteriol.">
        <title>Comparative genomics of 28 Salmonella enterica isolates: evidence for CRISPR-mediated adaptive sublineage evolution.</title>
        <authorList>
            <person name="Fricke W.F."/>
            <person name="Mammel M.K."/>
            <person name="McDermott P.F."/>
            <person name="Tartera C."/>
            <person name="White D.G."/>
            <person name="Leclerc J.E."/>
            <person name="Ravel J."/>
            <person name="Cebula T.A."/>
        </authorList>
    </citation>
    <scope>NUCLEOTIDE SEQUENCE [LARGE SCALE GENOMIC DNA]</scope>
    <source>
        <strain>SL254</strain>
    </source>
</reference>
<protein>
    <recommendedName>
        <fullName evidence="1">Holo-[acyl-carrier-protein] synthase</fullName>
        <shortName evidence="1">Holo-ACP synthase</shortName>
        <ecNumber evidence="1">2.7.8.7</ecNumber>
    </recommendedName>
    <alternativeName>
        <fullName evidence="1">4'-phosphopantetheinyl transferase AcpS</fullName>
    </alternativeName>
</protein>
<organism>
    <name type="scientific">Salmonella newport (strain SL254)</name>
    <dbReference type="NCBI Taxonomy" id="423368"/>
    <lineage>
        <taxon>Bacteria</taxon>
        <taxon>Pseudomonadati</taxon>
        <taxon>Pseudomonadota</taxon>
        <taxon>Gammaproteobacteria</taxon>
        <taxon>Enterobacterales</taxon>
        <taxon>Enterobacteriaceae</taxon>
        <taxon>Salmonella</taxon>
    </lineage>
</organism>
<feature type="chain" id="PRO_1000093915" description="Holo-[acyl-carrier-protein] synthase">
    <location>
        <begin position="1"/>
        <end position="126"/>
    </location>
</feature>
<feature type="binding site" evidence="1">
    <location>
        <position position="9"/>
    </location>
    <ligand>
        <name>Mg(2+)</name>
        <dbReference type="ChEBI" id="CHEBI:18420"/>
    </ligand>
</feature>
<feature type="binding site" evidence="1">
    <location>
        <position position="58"/>
    </location>
    <ligand>
        <name>Mg(2+)</name>
        <dbReference type="ChEBI" id="CHEBI:18420"/>
    </ligand>
</feature>
<keyword id="KW-0963">Cytoplasm</keyword>
<keyword id="KW-0275">Fatty acid biosynthesis</keyword>
<keyword id="KW-0276">Fatty acid metabolism</keyword>
<keyword id="KW-0444">Lipid biosynthesis</keyword>
<keyword id="KW-0443">Lipid metabolism</keyword>
<keyword id="KW-0460">Magnesium</keyword>
<keyword id="KW-0479">Metal-binding</keyword>
<keyword id="KW-0808">Transferase</keyword>
<sequence>MAILGLGTDIVEIARIEAVISRSGERLARRVLSDNEWAIWETHQQPVRFLAKRFAVKEAAAKAFGTGIRNGLAFNQFEVFNDELGKPRLRLWGEALILAEKLGVAHMHVTLADERHYACATVILES</sequence>